<reference key="1">
    <citation type="journal article" date="2009" name="PLoS Genet.">
        <title>Organised genome dynamics in the Escherichia coli species results in highly diverse adaptive paths.</title>
        <authorList>
            <person name="Touchon M."/>
            <person name="Hoede C."/>
            <person name="Tenaillon O."/>
            <person name="Barbe V."/>
            <person name="Baeriswyl S."/>
            <person name="Bidet P."/>
            <person name="Bingen E."/>
            <person name="Bonacorsi S."/>
            <person name="Bouchier C."/>
            <person name="Bouvet O."/>
            <person name="Calteau A."/>
            <person name="Chiapello H."/>
            <person name="Clermont O."/>
            <person name="Cruveiller S."/>
            <person name="Danchin A."/>
            <person name="Diard M."/>
            <person name="Dossat C."/>
            <person name="Karoui M.E."/>
            <person name="Frapy E."/>
            <person name="Garry L."/>
            <person name="Ghigo J.M."/>
            <person name="Gilles A.M."/>
            <person name="Johnson J."/>
            <person name="Le Bouguenec C."/>
            <person name="Lescat M."/>
            <person name="Mangenot S."/>
            <person name="Martinez-Jehanne V."/>
            <person name="Matic I."/>
            <person name="Nassif X."/>
            <person name="Oztas S."/>
            <person name="Petit M.A."/>
            <person name="Pichon C."/>
            <person name="Rouy Z."/>
            <person name="Ruf C.S."/>
            <person name="Schneider D."/>
            <person name="Tourret J."/>
            <person name="Vacherie B."/>
            <person name="Vallenet D."/>
            <person name="Medigue C."/>
            <person name="Rocha E.P.C."/>
            <person name="Denamur E."/>
        </authorList>
    </citation>
    <scope>NUCLEOTIDE SEQUENCE [LARGE SCALE GENOMIC DNA]</scope>
    <source>
        <strain>ED1a</strain>
    </source>
</reference>
<gene>
    <name evidence="1" type="primary">rnfH</name>
    <name type="ordered locus">ECED1_3056</name>
</gene>
<dbReference type="EMBL" id="CU928162">
    <property type="protein sequence ID" value="CAR09223.2"/>
    <property type="molecule type" value="Genomic_DNA"/>
</dbReference>
<dbReference type="RefSeq" id="WP_001117832.1">
    <property type="nucleotide sequence ID" value="NC_011745.1"/>
</dbReference>
<dbReference type="SMR" id="B7MYQ6"/>
<dbReference type="KEGG" id="ecq:ECED1_3056"/>
<dbReference type="HOGENOM" id="CLU_150721_1_0_6"/>
<dbReference type="Proteomes" id="UP000000748">
    <property type="component" value="Chromosome"/>
</dbReference>
<dbReference type="Gene3D" id="3.10.20.280">
    <property type="entry name" value="RnfH-like"/>
    <property type="match status" value="1"/>
</dbReference>
<dbReference type="HAMAP" id="MF_00460">
    <property type="entry name" value="UPF0125_RnfH"/>
    <property type="match status" value="1"/>
</dbReference>
<dbReference type="InterPro" id="IPR016155">
    <property type="entry name" value="Mopterin_synth/thiamin_S_b"/>
</dbReference>
<dbReference type="InterPro" id="IPR005346">
    <property type="entry name" value="RnfH"/>
</dbReference>
<dbReference type="InterPro" id="IPR037021">
    <property type="entry name" value="RnfH_sf"/>
</dbReference>
<dbReference type="NCBIfam" id="NF002490">
    <property type="entry name" value="PRK01777.1"/>
    <property type="match status" value="1"/>
</dbReference>
<dbReference type="PANTHER" id="PTHR37483">
    <property type="entry name" value="UPF0125 PROTEIN RATB"/>
    <property type="match status" value="1"/>
</dbReference>
<dbReference type="PANTHER" id="PTHR37483:SF1">
    <property type="entry name" value="UPF0125 PROTEIN RATB"/>
    <property type="match status" value="1"/>
</dbReference>
<dbReference type="Pfam" id="PF03658">
    <property type="entry name" value="Ub-RnfH"/>
    <property type="match status" value="1"/>
</dbReference>
<dbReference type="SUPFAM" id="SSF54285">
    <property type="entry name" value="MoaD/ThiS"/>
    <property type="match status" value="1"/>
</dbReference>
<accession>B7MYQ6</accession>
<protein>
    <recommendedName>
        <fullName evidence="1">Protein RnfH</fullName>
    </recommendedName>
</protein>
<name>RNFH_ECO81</name>
<feature type="chain" id="PRO_1000200183" description="Protein RnfH">
    <location>
        <begin position="1"/>
        <end position="96"/>
    </location>
</feature>
<evidence type="ECO:0000255" key="1">
    <source>
        <dbReference type="HAMAP-Rule" id="MF_00460"/>
    </source>
</evidence>
<proteinExistence type="inferred from homology"/>
<organism>
    <name type="scientific">Escherichia coli O81 (strain ED1a)</name>
    <dbReference type="NCBI Taxonomy" id="585397"/>
    <lineage>
        <taxon>Bacteria</taxon>
        <taxon>Pseudomonadati</taxon>
        <taxon>Pseudomonadota</taxon>
        <taxon>Gammaproteobacteria</taxon>
        <taxon>Enterobacterales</taxon>
        <taxon>Enterobacteriaceae</taxon>
        <taxon>Escherichia</taxon>
    </lineage>
</organism>
<sequence>MPGKIAVEVAYALPEKQYLQRVTLQEGATVEEAIRASGLLELRTDIDLTKNKVGIYSHPAKLSDIVHDGDRVEIYRPLIADPKELRRQRAEKSANK</sequence>
<comment type="similarity">
    <text evidence="1">Belongs to the UPF0125 (RnfH) family.</text>
</comment>